<reference evidence="6" key="1">
    <citation type="journal article" date="2018" name="J. Proteome Res.">
        <title>Mating-induced differential peptidomics of neuropeptides and protein hormones in Agrotis ipsilon moths.</title>
        <authorList>
            <person name="Diesner M."/>
            <person name="Gallot A."/>
            <person name="Binz H."/>
            <person name="Gaertner C."/>
            <person name="Vitecek S."/>
            <person name="Kahnt J."/>
            <person name="Schachtner J."/>
            <person name="Jacquin-Joly E."/>
            <person name="Gadenne C."/>
        </authorList>
    </citation>
    <scope>NUCLEOTIDE SEQUENCE [MRNA]</scope>
    <scope>PROTEIN SEQUENCE OF 74-104</scope>
    <scope>TISSUE SPECIFICITY</scope>
    <scope>MASS SPECTROMETRY</scope>
    <scope>IDENTIFICATION BY MASS SPECTROMETRY</scope>
    <scope>AMIDATION AT PRO-104</scope>
</reference>
<evidence type="ECO:0000250" key="1">
    <source>
        <dbReference type="UniProtKB" id="P82372"/>
    </source>
</evidence>
<evidence type="ECO:0000250" key="2">
    <source>
        <dbReference type="UniProtKB" id="P85826"/>
    </source>
</evidence>
<evidence type="ECO:0000255" key="3"/>
<evidence type="ECO:0000269" key="4">
    <source>
    </source>
</evidence>
<evidence type="ECO:0000303" key="5">
    <source>
    </source>
</evidence>
<evidence type="ECO:0000305" key="6"/>
<protein>
    <recommendedName>
        <fullName evidence="2">Diuretic hormone class 2</fullName>
    </recommendedName>
    <alternativeName>
        <fullName evidence="5">DH(31)</fullName>
    </alternativeName>
    <alternativeName>
        <fullName evidence="1">Diuretic peptide</fullName>
        <shortName evidence="1">DP</shortName>
    </alternativeName>
</protein>
<sequence>MVRATCLLASCVLFALLLIVPASAYPRYPSNYFREEGQYEPEEIMDMLNRLGNLIQMERKMENYKEDITSEKRALDLGLSRGYSGALQAKHLMGLAAANYAGGPGRRRRDAH</sequence>
<accession>C0HKT3</accession>
<organism>
    <name type="scientific">Agrotis ipsilon</name>
    <name type="common">Black cutworm moth</name>
    <dbReference type="NCBI Taxonomy" id="56364"/>
    <lineage>
        <taxon>Eukaryota</taxon>
        <taxon>Metazoa</taxon>
        <taxon>Ecdysozoa</taxon>
        <taxon>Arthropoda</taxon>
        <taxon>Hexapoda</taxon>
        <taxon>Insecta</taxon>
        <taxon>Pterygota</taxon>
        <taxon>Neoptera</taxon>
        <taxon>Endopterygota</taxon>
        <taxon>Lepidoptera</taxon>
        <taxon>Glossata</taxon>
        <taxon>Ditrysia</taxon>
        <taxon>Noctuoidea</taxon>
        <taxon>Noctuidae</taxon>
        <taxon>Noctuinae</taxon>
        <taxon>Noctuini</taxon>
        <taxon>Agrotis</taxon>
    </lineage>
</organism>
<feature type="signal peptide" evidence="3">
    <location>
        <begin position="1"/>
        <end position="24"/>
    </location>
</feature>
<feature type="propeptide" id="PRO_0000444226" evidence="6">
    <location>
        <begin position="25"/>
        <end position="71"/>
    </location>
</feature>
<feature type="peptide" id="PRO_0000444227" description="Diuretic hormone class 2" evidence="4">
    <location>
        <begin position="74"/>
        <end position="104"/>
    </location>
</feature>
<feature type="propeptide" id="PRO_0000444228" evidence="6">
    <location>
        <begin position="108"/>
        <end position="112"/>
    </location>
</feature>
<feature type="modified residue" description="Proline amide" evidence="4">
    <location>
        <position position="104"/>
    </location>
</feature>
<dbReference type="GO" id="GO:0005615">
    <property type="term" value="C:extracellular space"/>
    <property type="evidence" value="ECO:0007669"/>
    <property type="project" value="TreeGrafter"/>
</dbReference>
<dbReference type="GO" id="GO:0008613">
    <property type="term" value="F:diuretic hormone activity"/>
    <property type="evidence" value="ECO:0007669"/>
    <property type="project" value="InterPro"/>
</dbReference>
<dbReference type="GO" id="GO:0001664">
    <property type="term" value="F:G protein-coupled receptor binding"/>
    <property type="evidence" value="ECO:0007669"/>
    <property type="project" value="TreeGrafter"/>
</dbReference>
<dbReference type="GO" id="GO:0007589">
    <property type="term" value="P:body fluid secretion"/>
    <property type="evidence" value="ECO:0007669"/>
    <property type="project" value="InterPro"/>
</dbReference>
<dbReference type="GO" id="GO:0007218">
    <property type="term" value="P:neuropeptide signaling pathway"/>
    <property type="evidence" value="ECO:0007669"/>
    <property type="project" value="UniProtKB-KW"/>
</dbReference>
<dbReference type="InterPro" id="IPR034439">
    <property type="entry name" value="DH2-like"/>
</dbReference>
<dbReference type="PANTHER" id="PTHR41146">
    <property type="entry name" value="DIURETIC HORMONE CLASS 2"/>
    <property type="match status" value="1"/>
</dbReference>
<dbReference type="PANTHER" id="PTHR41146:SF1">
    <property type="entry name" value="DIURETIC HORMONE CLASS 2"/>
    <property type="match status" value="1"/>
</dbReference>
<keyword id="KW-0027">Amidation</keyword>
<keyword id="KW-0165">Cleavage on pair of basic residues</keyword>
<keyword id="KW-0903">Direct protein sequencing</keyword>
<keyword id="KW-0372">Hormone</keyword>
<keyword id="KW-0527">Neuropeptide</keyword>
<keyword id="KW-0964">Secreted</keyword>
<keyword id="KW-0732">Signal</keyword>
<name>DIUX_AGRIP</name>
<comment type="function">
    <text evidence="2">Regulation of fluid secretion. Stimulates Malpighian tubule fluid secretion.</text>
</comment>
<comment type="subcellular location">
    <subcellularLocation>
        <location evidence="6">Secreted</location>
    </subcellularLocation>
</comment>
<comment type="tissue specificity">
    <text evidence="4">Expressed in corpora cardiaca (CC), corpora allata (CA), antennal lobe (AL) and gnathal ganglion (GNG) (at protein level). Expression in CC, CA and AL detected in most animals, expression in GNG in few animals (at protein level).</text>
</comment>
<comment type="mass spectrometry"/>
<comment type="similarity">
    <text evidence="6">Belongs to the diuretic hormone class 2 family.</text>
</comment>
<proteinExistence type="evidence at protein level"/>